<keyword id="KW-0004">4Fe-4S</keyword>
<keyword id="KW-0067">ATP-binding</keyword>
<keyword id="KW-0963">Cytoplasm</keyword>
<keyword id="KW-0408">Iron</keyword>
<keyword id="KW-0411">Iron-sulfur</keyword>
<keyword id="KW-0460">Magnesium</keyword>
<keyword id="KW-0479">Metal-binding</keyword>
<keyword id="KW-0547">Nucleotide-binding</keyword>
<keyword id="KW-0694">RNA-binding</keyword>
<keyword id="KW-0808">Transferase</keyword>
<keyword id="KW-0819">tRNA processing</keyword>
<keyword id="KW-0820">tRNA-binding</keyword>
<proteinExistence type="inferred from homology"/>
<evidence type="ECO:0000255" key="1">
    <source>
        <dbReference type="HAMAP-Rule" id="MF_01850"/>
    </source>
</evidence>
<reference key="1">
    <citation type="submission" date="2008-04" db="EMBL/GenBank/DDBJ databases">
        <title>Complete sequence of chromosome 1 of Burkholderia ambifaria MC40-6.</title>
        <authorList>
            <person name="Copeland A."/>
            <person name="Lucas S."/>
            <person name="Lapidus A."/>
            <person name="Glavina del Rio T."/>
            <person name="Dalin E."/>
            <person name="Tice H."/>
            <person name="Pitluck S."/>
            <person name="Chain P."/>
            <person name="Malfatti S."/>
            <person name="Shin M."/>
            <person name="Vergez L."/>
            <person name="Lang D."/>
            <person name="Schmutz J."/>
            <person name="Larimer F."/>
            <person name="Land M."/>
            <person name="Hauser L."/>
            <person name="Kyrpides N."/>
            <person name="Lykidis A."/>
            <person name="Ramette A."/>
            <person name="Konstantinidis K."/>
            <person name="Tiedje J."/>
            <person name="Richardson P."/>
        </authorList>
    </citation>
    <scope>NUCLEOTIDE SEQUENCE [LARGE SCALE GENOMIC DNA]</scope>
    <source>
        <strain>MC40-6</strain>
    </source>
</reference>
<name>TTCA_BURA4</name>
<gene>
    <name evidence="1" type="primary">ttcA</name>
    <name type="ordered locus">BamMC406_2890</name>
</gene>
<organism>
    <name type="scientific">Burkholderia ambifaria (strain MC40-6)</name>
    <dbReference type="NCBI Taxonomy" id="398577"/>
    <lineage>
        <taxon>Bacteria</taxon>
        <taxon>Pseudomonadati</taxon>
        <taxon>Pseudomonadota</taxon>
        <taxon>Betaproteobacteria</taxon>
        <taxon>Burkholderiales</taxon>
        <taxon>Burkholderiaceae</taxon>
        <taxon>Burkholderia</taxon>
        <taxon>Burkholderia cepacia complex</taxon>
    </lineage>
</organism>
<comment type="function">
    <text evidence="1">Catalyzes the ATP-dependent 2-thiolation of cytidine in position 32 of tRNA, to form 2-thiocytidine (s(2)C32). The sulfur atoms are provided by the cysteine/cysteine desulfurase (IscS) system.</text>
</comment>
<comment type="catalytic activity">
    <reaction evidence="1">
        <text>cytidine(32) in tRNA + S-sulfanyl-L-cysteinyl-[cysteine desulfurase] + AH2 + ATP = 2-thiocytidine(32) in tRNA + L-cysteinyl-[cysteine desulfurase] + A + AMP + diphosphate + H(+)</text>
        <dbReference type="Rhea" id="RHEA:57048"/>
        <dbReference type="Rhea" id="RHEA-COMP:10288"/>
        <dbReference type="Rhea" id="RHEA-COMP:12157"/>
        <dbReference type="Rhea" id="RHEA-COMP:12158"/>
        <dbReference type="Rhea" id="RHEA-COMP:14821"/>
        <dbReference type="ChEBI" id="CHEBI:13193"/>
        <dbReference type="ChEBI" id="CHEBI:15378"/>
        <dbReference type="ChEBI" id="CHEBI:17499"/>
        <dbReference type="ChEBI" id="CHEBI:29950"/>
        <dbReference type="ChEBI" id="CHEBI:30616"/>
        <dbReference type="ChEBI" id="CHEBI:33019"/>
        <dbReference type="ChEBI" id="CHEBI:61963"/>
        <dbReference type="ChEBI" id="CHEBI:82748"/>
        <dbReference type="ChEBI" id="CHEBI:141453"/>
        <dbReference type="ChEBI" id="CHEBI:456215"/>
    </reaction>
    <physiologicalReaction direction="left-to-right" evidence="1">
        <dbReference type="Rhea" id="RHEA:57049"/>
    </physiologicalReaction>
</comment>
<comment type="cofactor">
    <cofactor evidence="1">
        <name>Mg(2+)</name>
        <dbReference type="ChEBI" id="CHEBI:18420"/>
    </cofactor>
</comment>
<comment type="cofactor">
    <cofactor evidence="1">
        <name>[4Fe-4S] cluster</name>
        <dbReference type="ChEBI" id="CHEBI:49883"/>
    </cofactor>
    <text evidence="1">Binds 1 [4Fe-4S] cluster per subunit. The cluster is chelated by three Cys residues, the fourth Fe has a free coordination site that may bind a sulfur atom transferred from the persulfide of IscS.</text>
</comment>
<comment type="pathway">
    <text evidence="1">tRNA modification.</text>
</comment>
<comment type="subunit">
    <text evidence="1">Homodimer.</text>
</comment>
<comment type="subcellular location">
    <subcellularLocation>
        <location evidence="1">Cytoplasm</location>
    </subcellularLocation>
</comment>
<comment type="miscellaneous">
    <text evidence="1">The thiolation reaction likely consists of two steps: a first activation step by ATP to form an adenylated intermediate of the target base of tRNA, and a second nucleophilic substitution step of the sulfur (S) atom supplied by the hydrosulfide attached to the Fe-S cluster.</text>
</comment>
<comment type="similarity">
    <text evidence="1">Belongs to the TtcA family.</text>
</comment>
<dbReference type="EC" id="2.8.1.-" evidence="1"/>
<dbReference type="EMBL" id="CP001025">
    <property type="protein sequence ID" value="ACB65366.1"/>
    <property type="molecule type" value="Genomic_DNA"/>
</dbReference>
<dbReference type="RefSeq" id="WP_012364868.1">
    <property type="nucleotide sequence ID" value="NC_010551.1"/>
</dbReference>
<dbReference type="SMR" id="B1YP61"/>
<dbReference type="KEGG" id="bac:BamMC406_2890"/>
<dbReference type="HOGENOM" id="CLU_026481_0_0_4"/>
<dbReference type="OrthoDB" id="9801054at2"/>
<dbReference type="Proteomes" id="UP000001680">
    <property type="component" value="Chromosome 1"/>
</dbReference>
<dbReference type="GO" id="GO:0005737">
    <property type="term" value="C:cytoplasm"/>
    <property type="evidence" value="ECO:0007669"/>
    <property type="project" value="UniProtKB-SubCell"/>
</dbReference>
<dbReference type="GO" id="GO:0051539">
    <property type="term" value="F:4 iron, 4 sulfur cluster binding"/>
    <property type="evidence" value="ECO:0007669"/>
    <property type="project" value="UniProtKB-UniRule"/>
</dbReference>
<dbReference type="GO" id="GO:0005524">
    <property type="term" value="F:ATP binding"/>
    <property type="evidence" value="ECO:0007669"/>
    <property type="project" value="UniProtKB-UniRule"/>
</dbReference>
<dbReference type="GO" id="GO:0000287">
    <property type="term" value="F:magnesium ion binding"/>
    <property type="evidence" value="ECO:0007669"/>
    <property type="project" value="UniProtKB-UniRule"/>
</dbReference>
<dbReference type="GO" id="GO:0016783">
    <property type="term" value="F:sulfurtransferase activity"/>
    <property type="evidence" value="ECO:0007669"/>
    <property type="project" value="UniProtKB-UniRule"/>
</dbReference>
<dbReference type="GO" id="GO:0000049">
    <property type="term" value="F:tRNA binding"/>
    <property type="evidence" value="ECO:0007669"/>
    <property type="project" value="UniProtKB-KW"/>
</dbReference>
<dbReference type="GO" id="GO:0034227">
    <property type="term" value="P:tRNA thio-modification"/>
    <property type="evidence" value="ECO:0007669"/>
    <property type="project" value="UniProtKB-UniRule"/>
</dbReference>
<dbReference type="CDD" id="cd24138">
    <property type="entry name" value="TtcA-like"/>
    <property type="match status" value="1"/>
</dbReference>
<dbReference type="Gene3D" id="3.40.50.620">
    <property type="entry name" value="HUPs"/>
    <property type="match status" value="1"/>
</dbReference>
<dbReference type="HAMAP" id="MF_01850">
    <property type="entry name" value="TtcA"/>
    <property type="match status" value="1"/>
</dbReference>
<dbReference type="InterPro" id="IPR014729">
    <property type="entry name" value="Rossmann-like_a/b/a_fold"/>
</dbReference>
<dbReference type="InterPro" id="IPR011063">
    <property type="entry name" value="TilS/TtcA_N"/>
</dbReference>
<dbReference type="InterPro" id="IPR012089">
    <property type="entry name" value="tRNA_Cyd_32_2_STrfase"/>
</dbReference>
<dbReference type="NCBIfam" id="NF007972">
    <property type="entry name" value="PRK10696.1"/>
    <property type="match status" value="1"/>
</dbReference>
<dbReference type="PANTHER" id="PTHR43686:SF1">
    <property type="entry name" value="AMINOTRAN_5 DOMAIN-CONTAINING PROTEIN"/>
    <property type="match status" value="1"/>
</dbReference>
<dbReference type="PANTHER" id="PTHR43686">
    <property type="entry name" value="SULFURTRANSFERASE-RELATED"/>
    <property type="match status" value="1"/>
</dbReference>
<dbReference type="Pfam" id="PF01171">
    <property type="entry name" value="ATP_bind_3"/>
    <property type="match status" value="1"/>
</dbReference>
<dbReference type="SUPFAM" id="SSF52402">
    <property type="entry name" value="Adenine nucleotide alpha hydrolases-like"/>
    <property type="match status" value="1"/>
</dbReference>
<protein>
    <recommendedName>
        <fullName evidence="1">tRNA-cytidine(32) 2-sulfurtransferase</fullName>
        <ecNumber evidence="1">2.8.1.-</ecNumber>
    </recommendedName>
    <alternativeName>
        <fullName evidence="1">Two-thiocytidine biosynthesis protein A</fullName>
    </alternativeName>
    <alternativeName>
        <fullName evidence="1">tRNA 2-thiocytidine biosynthesis protein TtcA</fullName>
    </alternativeName>
</protein>
<accession>B1YP61</accession>
<feature type="chain" id="PRO_0000348680" description="tRNA-cytidine(32) 2-sulfurtransferase">
    <location>
        <begin position="1"/>
        <end position="340"/>
    </location>
</feature>
<feature type="short sequence motif" description="PP-loop motif" evidence="1">
    <location>
        <begin position="74"/>
        <end position="79"/>
    </location>
</feature>
<feature type="binding site" evidence="1">
    <location>
        <position position="149"/>
    </location>
    <ligand>
        <name>[4Fe-4S] cluster</name>
        <dbReference type="ChEBI" id="CHEBI:49883"/>
    </ligand>
</feature>
<feature type="binding site" evidence="1">
    <location>
        <position position="152"/>
    </location>
    <ligand>
        <name>[4Fe-4S] cluster</name>
        <dbReference type="ChEBI" id="CHEBI:49883"/>
    </ligand>
</feature>
<feature type="binding site" evidence="1">
    <location>
        <position position="240"/>
    </location>
    <ligand>
        <name>[4Fe-4S] cluster</name>
        <dbReference type="ChEBI" id="CHEBI:49883"/>
    </ligand>
</feature>
<sequence>MNAPHMHDTAADGAAIEATVADIADTGRRALTRREQKEAYENNKLFKRIVRQVGQAIGDYNMIEQGDKVMVCLSGGKDSYAMLDVLLRLRERAPIDFDIVAVNLDQKQPGFPEHVLPEYLTQIGVPFHIENQDTYSIVKRLVPEGKTTCSLCSRLRRGILYRVAGELGATKIALGHHRDDILQTLLLNMFYGGKLKGMPPKLQSDDGKNVVIRPLAYVKETDLEKFAELREFPIIPCNLCGSQPNLKRAEMKALIRDWDKRFPGRVDNMFSALANVVPSHLMDTTQFPFASLRATGQADPQGDIAFDEEPCASGDDTAATRDGARPIAARPISIVQFDDL</sequence>